<reference key="1">
    <citation type="submission" date="2006-01" db="EMBL/GenBank/DDBJ databases">
        <title>A comparison of the first two published chloroplast genomes in Asteraceae: Lactuca and Helianthus.</title>
        <authorList>
            <person name="Timme R.E."/>
            <person name="Kuehl J.V."/>
            <person name="Boore J.L."/>
            <person name="Jansen R.K."/>
        </authorList>
    </citation>
    <scope>NUCLEOTIDE SEQUENCE [LARGE SCALE GENOMIC DNA]</scope>
    <source>
        <strain>cv. HA383</strain>
    </source>
</reference>
<accession>Q1KXS4</accession>
<comment type="function">
    <text evidence="1">One of the essential components for the initiation of protein synthesis. Stabilizes the binding of IF-2 and IF-3 on the 30S subunit to which N-formylmethionyl-tRNA(fMet) subsequently binds. Helps modulate mRNA selection, yielding the 30S pre-initiation complex (PIC). Upon addition of the 50S ribosomal subunit IF-1, IF-2 and IF-3 are released leaving the mature 70S translation initiation complex.</text>
</comment>
<comment type="subunit">
    <text evidence="1">Component of the 30S ribosomal translation pre-initiation complex which assembles on the 30S ribosome in the order IF-2 and IF-3, IF-1 and N-formylmethionyl-tRNA(fMet); mRNA recruitment can occur at any time during PIC assembly.</text>
</comment>
<comment type="subcellular location">
    <subcellularLocation>
        <location evidence="1">Plastid</location>
        <location evidence="1">Chloroplast</location>
    </subcellularLocation>
</comment>
<comment type="similarity">
    <text evidence="1">Belongs to the IF-1 family.</text>
</comment>
<proteinExistence type="inferred from homology"/>
<evidence type="ECO:0000255" key="1">
    <source>
        <dbReference type="HAMAP-Rule" id="MF_00075"/>
    </source>
</evidence>
<protein>
    <recommendedName>
        <fullName evidence="1">Translation initiation factor IF-1, chloroplastic</fullName>
    </recommendedName>
</protein>
<geneLocation type="chloroplast"/>
<keyword id="KW-0150">Chloroplast</keyword>
<keyword id="KW-0396">Initiation factor</keyword>
<keyword id="KW-0934">Plastid</keyword>
<keyword id="KW-0648">Protein biosynthesis</keyword>
<keyword id="KW-0694">RNA-binding</keyword>
<keyword id="KW-0699">rRNA-binding</keyword>
<feature type="chain" id="PRO_0000275392" description="Translation initiation factor IF-1, chloroplastic">
    <location>
        <begin position="1"/>
        <end position="77"/>
    </location>
</feature>
<feature type="domain" description="S1-like" evidence="1">
    <location>
        <begin position="1"/>
        <end position="71"/>
    </location>
</feature>
<dbReference type="EMBL" id="DQ383815">
    <property type="protein sequence ID" value="ABD47180.1"/>
    <property type="molecule type" value="Genomic_DNA"/>
</dbReference>
<dbReference type="RefSeq" id="YP_588152.1">
    <property type="nucleotide sequence ID" value="NC_007977.1"/>
</dbReference>
<dbReference type="SMR" id="Q1KXS4"/>
<dbReference type="EnsemblPlants" id="mRNA:HanXRQr2_Chr01g0017371">
    <property type="protein sequence ID" value="CDS:HanXRQr2_Chr01g0017371.1"/>
    <property type="gene ID" value="HanXRQr2_Chr01g0017371"/>
</dbReference>
<dbReference type="EnsemblPlants" id="mRNA:HanXRQr2_Chr15g0708241">
    <property type="protein sequence ID" value="CDS:HanXRQr2_Chr15g0708241.1"/>
    <property type="gene ID" value="HanXRQr2_Chr15g0708241"/>
</dbReference>
<dbReference type="EnsemblPlants" id="mRNA:HanXRQr2_Chr17g0785341">
    <property type="protein sequence ID" value="CDS:HanXRQr2_Chr17g0785341.1"/>
    <property type="gene ID" value="HanXRQr2_Chr17g0785341"/>
</dbReference>
<dbReference type="GeneID" id="4055694"/>
<dbReference type="Gramene" id="mRNA:HanXRQr2_Chr01g0017371">
    <property type="protein sequence ID" value="CDS:HanXRQr2_Chr01g0017371.1"/>
    <property type="gene ID" value="HanXRQr2_Chr01g0017371"/>
</dbReference>
<dbReference type="Gramene" id="mRNA:HanXRQr2_Chr15g0708241">
    <property type="protein sequence ID" value="CDS:HanXRQr2_Chr15g0708241.1"/>
    <property type="gene ID" value="HanXRQr2_Chr15g0708241"/>
</dbReference>
<dbReference type="Gramene" id="mRNA:HanXRQr2_Chr17g0785341">
    <property type="protein sequence ID" value="CDS:HanXRQr2_Chr17g0785341.1"/>
    <property type="gene ID" value="HanXRQr2_Chr17g0785341"/>
</dbReference>
<dbReference type="KEGG" id="han:4055694"/>
<dbReference type="OrthoDB" id="1714886at2759"/>
<dbReference type="GO" id="GO:0009507">
    <property type="term" value="C:chloroplast"/>
    <property type="evidence" value="ECO:0007669"/>
    <property type="project" value="UniProtKB-SubCell"/>
</dbReference>
<dbReference type="GO" id="GO:0043022">
    <property type="term" value="F:ribosome binding"/>
    <property type="evidence" value="ECO:0007669"/>
    <property type="project" value="UniProtKB-UniRule"/>
</dbReference>
<dbReference type="GO" id="GO:0019843">
    <property type="term" value="F:rRNA binding"/>
    <property type="evidence" value="ECO:0007669"/>
    <property type="project" value="UniProtKB-UniRule"/>
</dbReference>
<dbReference type="GO" id="GO:0003743">
    <property type="term" value="F:translation initiation factor activity"/>
    <property type="evidence" value="ECO:0007669"/>
    <property type="project" value="UniProtKB-UniRule"/>
</dbReference>
<dbReference type="CDD" id="cd04451">
    <property type="entry name" value="S1_IF1"/>
    <property type="match status" value="1"/>
</dbReference>
<dbReference type="FunFam" id="2.40.50.140:FF:000019">
    <property type="entry name" value="Translation initiation factor IF-1, chloroplastic"/>
    <property type="match status" value="1"/>
</dbReference>
<dbReference type="Gene3D" id="2.40.50.140">
    <property type="entry name" value="Nucleic acid-binding proteins"/>
    <property type="match status" value="1"/>
</dbReference>
<dbReference type="HAMAP" id="MF_00075">
    <property type="entry name" value="IF_1"/>
    <property type="match status" value="1"/>
</dbReference>
<dbReference type="InterPro" id="IPR012340">
    <property type="entry name" value="NA-bd_OB-fold"/>
</dbReference>
<dbReference type="InterPro" id="IPR006196">
    <property type="entry name" value="RNA-binding_domain_S1_IF1"/>
</dbReference>
<dbReference type="InterPro" id="IPR003029">
    <property type="entry name" value="S1_domain"/>
</dbReference>
<dbReference type="InterPro" id="IPR004368">
    <property type="entry name" value="TIF_IF1"/>
</dbReference>
<dbReference type="NCBIfam" id="TIGR00008">
    <property type="entry name" value="infA"/>
    <property type="match status" value="1"/>
</dbReference>
<dbReference type="PANTHER" id="PTHR33370">
    <property type="entry name" value="TRANSLATION INITIATION FACTOR IF-1, CHLOROPLASTIC"/>
    <property type="match status" value="1"/>
</dbReference>
<dbReference type="PANTHER" id="PTHR33370:SF1">
    <property type="entry name" value="TRANSLATION INITIATION FACTOR IF-1, CHLOROPLASTIC"/>
    <property type="match status" value="1"/>
</dbReference>
<dbReference type="Pfam" id="PF01176">
    <property type="entry name" value="eIF-1a"/>
    <property type="match status" value="1"/>
</dbReference>
<dbReference type="SMART" id="SM00316">
    <property type="entry name" value="S1"/>
    <property type="match status" value="1"/>
</dbReference>
<dbReference type="SUPFAM" id="SSF50249">
    <property type="entry name" value="Nucleic acid-binding proteins"/>
    <property type="match status" value="1"/>
</dbReference>
<dbReference type="PROSITE" id="PS50832">
    <property type="entry name" value="S1_IF1_TYPE"/>
    <property type="match status" value="1"/>
</dbReference>
<name>IF1C_HELAN</name>
<organism>
    <name type="scientific">Helianthus annuus</name>
    <name type="common">Common sunflower</name>
    <dbReference type="NCBI Taxonomy" id="4232"/>
    <lineage>
        <taxon>Eukaryota</taxon>
        <taxon>Viridiplantae</taxon>
        <taxon>Streptophyta</taxon>
        <taxon>Embryophyta</taxon>
        <taxon>Tracheophyta</taxon>
        <taxon>Spermatophyta</taxon>
        <taxon>Magnoliopsida</taxon>
        <taxon>eudicotyledons</taxon>
        <taxon>Gunneridae</taxon>
        <taxon>Pentapetalae</taxon>
        <taxon>asterids</taxon>
        <taxon>campanulids</taxon>
        <taxon>Asterales</taxon>
        <taxon>Asteraceae</taxon>
        <taxon>Asteroideae</taxon>
        <taxon>Heliantheae alliance</taxon>
        <taxon>Heliantheae</taxon>
        <taxon>Helianthus</taxon>
    </lineage>
</organism>
<gene>
    <name evidence="1" type="primary">infA</name>
</gene>
<sequence length="77" mass="9168">MKEQKWIHEGLITESLPNGMFRVRLDNEDMILGYVSGKIRRSFIRILPGDRVKIEVSRYDSTRGRIIYRLRNKDSKD</sequence>